<name>PP4C_MOUSE</name>
<protein>
    <recommendedName>
        <fullName>Serine/threonine-protein phosphatase 4 catalytic subunit</fullName>
        <shortName>PP4C</shortName>
        <shortName>Pp4</shortName>
        <ecNumber>3.1.3.16</ecNumber>
    </recommendedName>
    <alternativeName>
        <fullName>Protein phosphatase X</fullName>
        <shortName>PP-X</shortName>
    </alternativeName>
</protein>
<dbReference type="EC" id="3.1.3.16"/>
<dbReference type="EMBL" id="AF088911">
    <property type="protein sequence ID" value="AAC96297.1"/>
    <property type="molecule type" value="mRNA"/>
</dbReference>
<dbReference type="EMBL" id="AF378669">
    <property type="protein sequence ID" value="AAL35110.1"/>
    <property type="molecule type" value="Genomic_DNA"/>
</dbReference>
<dbReference type="EMBL" id="BC001993">
    <property type="protein sequence ID" value="AAH01993.1"/>
    <property type="molecule type" value="mRNA"/>
</dbReference>
<dbReference type="EMBL" id="U79747">
    <property type="protein sequence ID" value="AAB38494.1"/>
    <property type="status" value="ALT_FRAME"/>
    <property type="molecule type" value="mRNA"/>
</dbReference>
<dbReference type="CCDS" id="CCDS21844.1"/>
<dbReference type="RefSeq" id="NP_001347393.1">
    <property type="nucleotide sequence ID" value="NM_001360464.1"/>
</dbReference>
<dbReference type="RefSeq" id="NP_062648.1">
    <property type="nucleotide sequence ID" value="NM_019674.4"/>
</dbReference>
<dbReference type="SMR" id="P97470"/>
<dbReference type="BioGRID" id="207966">
    <property type="interactions" value="55"/>
</dbReference>
<dbReference type="ComplexPortal" id="CPX-157">
    <property type="entry name" value="PPP4C-PPP4R1 protein phosphatase 4 complex"/>
</dbReference>
<dbReference type="ComplexPortal" id="CPX-158">
    <property type="entry name" value="PPP4C-PPP4R2-PPP4R3A protein phosphatase 4 complex"/>
</dbReference>
<dbReference type="ComplexPortal" id="CPX-163">
    <property type="entry name" value="PPP4C-PPP4R2 protein phosphatase 4 complex"/>
</dbReference>
<dbReference type="ComplexPortal" id="CPX-164">
    <property type="entry name" value="PPP4C-PPP4R2-PPP4R3B protein phosphatase 4 complex"/>
</dbReference>
<dbReference type="ComplexPortal" id="CPX-165">
    <property type="entry name" value="PPP4C-PPP4R4 protein phosphatase 4 complex"/>
</dbReference>
<dbReference type="FunCoup" id="P97470">
    <property type="interactions" value="3256"/>
</dbReference>
<dbReference type="IntAct" id="P97470">
    <property type="interactions" value="33"/>
</dbReference>
<dbReference type="STRING" id="10090.ENSMUSP00000146245"/>
<dbReference type="GlyGen" id="P97470">
    <property type="glycosylation" value="1 site, 1 N-linked glycan (1 site)"/>
</dbReference>
<dbReference type="iPTMnet" id="P97470"/>
<dbReference type="PhosphoSitePlus" id="P97470"/>
<dbReference type="SwissPalm" id="P97470"/>
<dbReference type="jPOST" id="P97470"/>
<dbReference type="PaxDb" id="10090-ENSMUSP00000032936"/>
<dbReference type="PeptideAtlas" id="P97470"/>
<dbReference type="ProteomicsDB" id="289375"/>
<dbReference type="Pumba" id="P97470"/>
<dbReference type="Antibodypedia" id="26991">
    <property type="antibodies" value="439 antibodies from 39 providers"/>
</dbReference>
<dbReference type="DNASU" id="56420"/>
<dbReference type="Ensembl" id="ENSMUST00000032936.8">
    <property type="protein sequence ID" value="ENSMUSP00000032936.7"/>
    <property type="gene ID" value="ENSMUSG00000030697.8"/>
</dbReference>
<dbReference type="Ensembl" id="ENSMUST00000206570.2">
    <property type="protein sequence ID" value="ENSMUSP00000146245.2"/>
    <property type="gene ID" value="ENSMUSG00000030697.8"/>
</dbReference>
<dbReference type="GeneID" id="56420"/>
<dbReference type="KEGG" id="mmu:56420"/>
<dbReference type="UCSC" id="uc009jss.1">
    <property type="organism name" value="mouse"/>
</dbReference>
<dbReference type="AGR" id="MGI:1891763"/>
<dbReference type="CTD" id="5531"/>
<dbReference type="MGI" id="MGI:1891763">
    <property type="gene designation" value="Ppp4c"/>
</dbReference>
<dbReference type="VEuPathDB" id="HostDB:ENSMUSG00000030697"/>
<dbReference type="eggNOG" id="KOG0372">
    <property type="taxonomic scope" value="Eukaryota"/>
</dbReference>
<dbReference type="GeneTree" id="ENSGT00930000151040"/>
<dbReference type="HOGENOM" id="CLU_004962_8_1_1"/>
<dbReference type="InParanoid" id="P97470"/>
<dbReference type="OMA" id="QSTMPID"/>
<dbReference type="OrthoDB" id="1930084at2759"/>
<dbReference type="PhylomeDB" id="P97470"/>
<dbReference type="TreeFam" id="TF105559"/>
<dbReference type="Reactome" id="R-MMU-5693607">
    <property type="pathway name" value="Processing of DNA double-strand break ends"/>
</dbReference>
<dbReference type="BioGRID-ORCS" id="56420">
    <property type="hits" value="46 hits in 117 CRISPR screens"/>
</dbReference>
<dbReference type="ChiTaRS" id="Ppp4c">
    <property type="organism name" value="mouse"/>
</dbReference>
<dbReference type="PRO" id="PR:P97470"/>
<dbReference type="Proteomes" id="UP000000589">
    <property type="component" value="Chromosome 7"/>
</dbReference>
<dbReference type="RNAct" id="P97470">
    <property type="molecule type" value="protein"/>
</dbReference>
<dbReference type="Bgee" id="ENSMUSG00000030697">
    <property type="expression patterns" value="Expressed in mandibular prominence and 266 other cell types or tissues"/>
</dbReference>
<dbReference type="ExpressionAtlas" id="P97470">
    <property type="expression patterns" value="baseline and differential"/>
</dbReference>
<dbReference type="GO" id="GO:0005813">
    <property type="term" value="C:centrosome"/>
    <property type="evidence" value="ECO:0007669"/>
    <property type="project" value="UniProtKB-SubCell"/>
</dbReference>
<dbReference type="GO" id="GO:0000785">
    <property type="term" value="C:chromatin"/>
    <property type="evidence" value="ECO:0000266"/>
    <property type="project" value="ComplexPortal"/>
</dbReference>
<dbReference type="GO" id="GO:0005737">
    <property type="term" value="C:cytoplasm"/>
    <property type="evidence" value="ECO:0000314"/>
    <property type="project" value="MGI"/>
</dbReference>
<dbReference type="GO" id="GO:0005829">
    <property type="term" value="C:cytosol"/>
    <property type="evidence" value="ECO:0007669"/>
    <property type="project" value="Ensembl"/>
</dbReference>
<dbReference type="GO" id="GO:0005654">
    <property type="term" value="C:nucleoplasm"/>
    <property type="evidence" value="ECO:0007669"/>
    <property type="project" value="Ensembl"/>
</dbReference>
<dbReference type="GO" id="GO:0005634">
    <property type="term" value="C:nucleus"/>
    <property type="evidence" value="ECO:0000314"/>
    <property type="project" value="MGI"/>
</dbReference>
<dbReference type="GO" id="GO:0005886">
    <property type="term" value="C:plasma membrane"/>
    <property type="evidence" value="ECO:0007669"/>
    <property type="project" value="Ensembl"/>
</dbReference>
<dbReference type="GO" id="GO:0030289">
    <property type="term" value="C:protein phosphatase 4 complex"/>
    <property type="evidence" value="ECO:0000314"/>
    <property type="project" value="MGI"/>
</dbReference>
<dbReference type="GO" id="GO:0046872">
    <property type="term" value="F:metal ion binding"/>
    <property type="evidence" value="ECO:0007669"/>
    <property type="project" value="UniProtKB-KW"/>
</dbReference>
<dbReference type="GO" id="GO:0004722">
    <property type="term" value="F:protein serine/threonine phosphatase activity"/>
    <property type="evidence" value="ECO:0000250"/>
    <property type="project" value="UniProtKB"/>
</dbReference>
<dbReference type="GO" id="GO:2000779">
    <property type="term" value="P:regulation of double-strand break repair"/>
    <property type="evidence" value="ECO:0000266"/>
    <property type="project" value="ComplexPortal"/>
</dbReference>
<dbReference type="GO" id="GO:0010569">
    <property type="term" value="P:regulation of double-strand break repair via homologous recombination"/>
    <property type="evidence" value="ECO:0000250"/>
    <property type="project" value="UniProtKB"/>
</dbReference>
<dbReference type="CDD" id="cd07415">
    <property type="entry name" value="MPP_PP2A_PP4_PP6"/>
    <property type="match status" value="1"/>
</dbReference>
<dbReference type="FunFam" id="3.60.21.10:FF:000010">
    <property type="entry name" value="Serine/threonine-protein phosphatase"/>
    <property type="match status" value="1"/>
</dbReference>
<dbReference type="Gene3D" id="3.60.21.10">
    <property type="match status" value="1"/>
</dbReference>
<dbReference type="InterPro" id="IPR004843">
    <property type="entry name" value="Calcineurin-like_PHP_ApaH"/>
</dbReference>
<dbReference type="InterPro" id="IPR029052">
    <property type="entry name" value="Metallo-depent_PP-like"/>
</dbReference>
<dbReference type="InterPro" id="IPR047129">
    <property type="entry name" value="PPA2-like"/>
</dbReference>
<dbReference type="InterPro" id="IPR006186">
    <property type="entry name" value="Ser/Thr-sp_prot-phosphatase"/>
</dbReference>
<dbReference type="PANTHER" id="PTHR45619">
    <property type="entry name" value="SERINE/THREONINE-PROTEIN PHOSPHATASE PP2A-RELATED"/>
    <property type="match status" value="1"/>
</dbReference>
<dbReference type="Pfam" id="PF00149">
    <property type="entry name" value="Metallophos"/>
    <property type="match status" value="1"/>
</dbReference>
<dbReference type="PRINTS" id="PR00114">
    <property type="entry name" value="STPHPHTASE"/>
</dbReference>
<dbReference type="SMART" id="SM00156">
    <property type="entry name" value="PP2Ac"/>
    <property type="match status" value="1"/>
</dbReference>
<dbReference type="SUPFAM" id="SSF56300">
    <property type="entry name" value="Metallo-dependent phosphatases"/>
    <property type="match status" value="1"/>
</dbReference>
<dbReference type="PROSITE" id="PS00125">
    <property type="entry name" value="SER_THR_PHOSPHATASE"/>
    <property type="match status" value="1"/>
</dbReference>
<evidence type="ECO:0000250" key="1"/>
<evidence type="ECO:0000250" key="2">
    <source>
        <dbReference type="UniProtKB" id="P60510"/>
    </source>
</evidence>
<evidence type="ECO:0000269" key="3">
    <source>
    </source>
</evidence>
<evidence type="ECO:0000305" key="4"/>
<comment type="function">
    <text evidence="1 3">Protein phosphatase that is involved in many processes such as microtubule organization at centrosomes, maturation of spliceosomal snRNPs, apoptosis, DNA repair, tumor necrosis factor (TNF)-alpha signaling, activation of c-Jun N-terminal kinase MAPK8, regulation of histone acetylation, DNA damage checkpoint signaling, NF-kappa-B activation and cell migration. The PPP4C-PPP4R1 PP4 complex may play a role in dephosphorylation and regulation of HDAC3. The PPP4C-PPP4R2-PPP4R3A PP4 complex specifically dephosphorylates H2AX phosphorylated on Ser-140 (gamma-H2AX) generated during DNA replication and required for DNA double strand break repair (By similarity). Dephosphorylates NDEL1 at CDK1 phosphorylation sites and negatively regulates CDK1 activity in interphase. In response to DNA damage, catalyzes RPA2 dephosphorylation, an essential step for DNA repair since it allows the efficient RPA2-mediated recruitment of RAD51 to chromatin (By similarity).</text>
</comment>
<comment type="catalytic activity">
    <reaction>
        <text>O-phospho-L-seryl-[protein] + H2O = L-seryl-[protein] + phosphate</text>
        <dbReference type="Rhea" id="RHEA:20629"/>
        <dbReference type="Rhea" id="RHEA-COMP:9863"/>
        <dbReference type="Rhea" id="RHEA-COMP:11604"/>
        <dbReference type="ChEBI" id="CHEBI:15377"/>
        <dbReference type="ChEBI" id="CHEBI:29999"/>
        <dbReference type="ChEBI" id="CHEBI:43474"/>
        <dbReference type="ChEBI" id="CHEBI:83421"/>
        <dbReference type="EC" id="3.1.3.16"/>
    </reaction>
</comment>
<comment type="catalytic activity">
    <reaction>
        <text>O-phospho-L-threonyl-[protein] + H2O = L-threonyl-[protein] + phosphate</text>
        <dbReference type="Rhea" id="RHEA:47004"/>
        <dbReference type="Rhea" id="RHEA-COMP:11060"/>
        <dbReference type="Rhea" id="RHEA-COMP:11605"/>
        <dbReference type="ChEBI" id="CHEBI:15377"/>
        <dbReference type="ChEBI" id="CHEBI:30013"/>
        <dbReference type="ChEBI" id="CHEBI:43474"/>
        <dbReference type="ChEBI" id="CHEBI:61977"/>
        <dbReference type="EC" id="3.1.3.16"/>
    </reaction>
</comment>
<comment type="cofactor">
    <cofactor evidence="1">
        <name>Mn(2+)</name>
        <dbReference type="ChEBI" id="CHEBI:29035"/>
    </cofactor>
    <text evidence="1">Binds 2 manganese ions per subunit.</text>
</comment>
<comment type="subunit">
    <text evidence="1">Serine/threonine-protein phosphatase 4 (PP4) occurs in different assemblies of the catalytic and one or more regulatory subunits. Component of the PP4 complexes PPP4C-PPP4R1, PPP4C-PPP4R2, PPP4C-PPP4R2-PPP4R3A, PPP4C-PPP4R2-PPP4R3B and PPP4C-PPP4R4. The PPP4C-PPP4R2 complex appears to be a tetramer composed of 2 molecules of PPP4C and 2 molecules of PPP4R2. Interacts with REL, NFKB1/p50 and RELA. Interacts with SMN1 and GEMIN4. Interacts with IRS4 (phosphorylated). Interacts with SMEK1/PPP4R3A; the interaction requires PP4R2. Interacts with HDAC3 (By similarity).</text>
</comment>
<comment type="subcellular location">
    <subcellularLocation>
        <location>Cytoplasm</location>
    </subcellularLocation>
    <subcellularLocation>
        <location>Nucleus</location>
    </subcellularLocation>
    <subcellularLocation>
        <location>Cytoplasm</location>
        <location>Cytoskeleton</location>
        <location>Microtubule organizing center</location>
        <location>Centrosome</location>
    </subcellularLocation>
</comment>
<comment type="PTM">
    <text evidence="2">Methylation at the C-terminal Leu-307 is critical for interactions with regulatory subunits and functions in DNA repair.</text>
</comment>
<comment type="similarity">
    <text evidence="4">Belongs to the PPP phosphatase family. PP-4 (PP-X) subfamily.</text>
</comment>
<comment type="sequence caution" evidence="4">
    <conflict type="frameshift">
        <sequence resource="EMBL-CDS" id="AAB38494"/>
    </conflict>
</comment>
<feature type="initiator methionine" description="Removed" evidence="2">
    <location>
        <position position="1"/>
    </location>
</feature>
<feature type="chain" id="PRO_0000058884" description="Serine/threonine-protein phosphatase 4 catalytic subunit">
    <location>
        <begin position="2"/>
        <end position="307"/>
    </location>
</feature>
<feature type="active site" description="Proton donor" evidence="1">
    <location>
        <position position="115"/>
    </location>
</feature>
<feature type="binding site" evidence="1">
    <location>
        <position position="54"/>
    </location>
    <ligand>
        <name>Mn(2+)</name>
        <dbReference type="ChEBI" id="CHEBI:29035"/>
        <label>1</label>
    </ligand>
</feature>
<feature type="binding site" evidence="1">
    <location>
        <position position="56"/>
    </location>
    <ligand>
        <name>Mn(2+)</name>
        <dbReference type="ChEBI" id="CHEBI:29035"/>
        <label>1</label>
    </ligand>
</feature>
<feature type="binding site" evidence="1">
    <location>
        <position position="82"/>
    </location>
    <ligand>
        <name>Mn(2+)</name>
        <dbReference type="ChEBI" id="CHEBI:29035"/>
        <label>1</label>
    </ligand>
</feature>
<feature type="binding site" evidence="1">
    <location>
        <position position="82"/>
    </location>
    <ligand>
        <name>Mn(2+)</name>
        <dbReference type="ChEBI" id="CHEBI:29035"/>
        <label>2</label>
    </ligand>
</feature>
<feature type="binding site" evidence="1">
    <location>
        <position position="114"/>
    </location>
    <ligand>
        <name>Mn(2+)</name>
        <dbReference type="ChEBI" id="CHEBI:29035"/>
        <label>2</label>
    </ligand>
</feature>
<feature type="binding site" evidence="1">
    <location>
        <position position="164"/>
    </location>
    <ligand>
        <name>Mn(2+)</name>
        <dbReference type="ChEBI" id="CHEBI:29035"/>
        <label>2</label>
    </ligand>
</feature>
<feature type="binding site" evidence="1">
    <location>
        <position position="238"/>
    </location>
    <ligand>
        <name>Mn(2+)</name>
        <dbReference type="ChEBI" id="CHEBI:29035"/>
        <label>2</label>
    </ligand>
</feature>
<feature type="modified residue" description="N-acetylalanine" evidence="2">
    <location>
        <position position="2"/>
    </location>
</feature>
<feature type="modified residue" description="Leucine methyl ester" evidence="2">
    <location>
        <position position="307"/>
    </location>
</feature>
<feature type="sequence conflict" description="In Ref. 2; AAB38494." evidence="4" ref="2">
    <original>LL</original>
    <variation>FF</variation>
    <location>
        <begin position="95"/>
        <end position="96"/>
    </location>
</feature>
<reference key="1">
    <citation type="journal article" date="1998" name="J. Biol. Chem.">
        <title>Protein phosphatase X interacts with c-Rel and stimulates c-Rel/nuclear factor kappaB activity.</title>
        <authorList>
            <person name="Hu M.C.-T."/>
            <person name="Tang-Oxley Q."/>
            <person name="Qiu W.R."/>
            <person name="Wang Y.-P."/>
            <person name="Mihindukulasuriya K.A."/>
            <person name="Afshar R."/>
            <person name="Tan T.-H."/>
        </authorList>
    </citation>
    <scope>NUCLEOTIDE SEQUENCE [MRNA]</scope>
</reference>
<reference key="2">
    <citation type="journal article" date="2001" name="Gene">
        <title>Genomic structure of the mouse PP4 gene: a developmentally regulated protein phosphatase.</title>
        <authorList>
            <person name="Hu M.C.-T."/>
            <person name="Shui J.W."/>
            <person name="Mihindukulasuriya K.A."/>
            <person name="Tan T.-H."/>
        </authorList>
    </citation>
    <scope>NUCLEOTIDE SEQUENCE [GENOMIC DNA]</scope>
    <source>
        <strain>129/SvJ</strain>
    </source>
</reference>
<reference key="3">
    <citation type="journal article" date="2004" name="Genome Res.">
        <title>The status, quality, and expansion of the NIH full-length cDNA project: the Mammalian Gene Collection (MGC).</title>
        <authorList>
            <consortium name="The MGC Project Team"/>
        </authorList>
    </citation>
    <scope>NUCLEOTIDE SEQUENCE [LARGE SCALE MRNA]</scope>
    <source>
        <tissue>Mammary tumor</tissue>
    </source>
</reference>
<reference key="4">
    <citation type="submission" date="1996-11" db="EMBL/GenBank/DDBJ databases">
        <authorList>
            <person name="Sussman D.J."/>
        </authorList>
    </citation>
    <scope>NUCLEOTIDE SEQUENCE [MRNA] OF 79-293</scope>
    <source>
        <strain>BALB/cJ</strain>
    </source>
</reference>
<reference key="5">
    <citation type="journal article" date="2008" name="J. Biol. Chem.">
        <title>PP4R4/KIAA1622 forms a novel stable cytosolic complex with phosphoprotein phosphatase 4.</title>
        <authorList>
            <person name="Chen G.I."/>
            <person name="Tisayakorn S."/>
            <person name="Jorgensen C."/>
            <person name="D'Ambrosio L.M."/>
            <person name="Goudreault M."/>
            <person name="Gingras A.-C."/>
        </authorList>
    </citation>
    <scope>INTERACTION WITH PPP4C</scope>
</reference>
<reference key="6">
    <citation type="journal article" date="2008" name="J. Cell Biol.">
        <title>Protein phosphatase 4 catalytic subunit regulates Cdk1 activity and microtubule organization via NDEL1 dephosphorylation.</title>
        <authorList>
            <person name="Toyo-oka K."/>
            <person name="Mori D."/>
            <person name="Yano Y."/>
            <person name="Shiota M."/>
            <person name="Iwao H."/>
            <person name="Goto H."/>
            <person name="Inagaki M."/>
            <person name="Hiraiwa N."/>
            <person name="Muramatsu M."/>
            <person name="Wynshaw-Boris A."/>
            <person name="Yoshiki A."/>
            <person name="Hirotsune S."/>
        </authorList>
    </citation>
    <scope>FUNCTION</scope>
</reference>
<reference key="7">
    <citation type="journal article" date="2010" name="Cell">
        <title>A tissue-specific atlas of mouse protein phosphorylation and expression.</title>
        <authorList>
            <person name="Huttlin E.L."/>
            <person name="Jedrychowski M.P."/>
            <person name="Elias J.E."/>
            <person name="Goswami T."/>
            <person name="Rad R."/>
            <person name="Beausoleil S.A."/>
            <person name="Villen J."/>
            <person name="Haas W."/>
            <person name="Sowa M.E."/>
            <person name="Gygi S.P."/>
        </authorList>
    </citation>
    <scope>IDENTIFICATION BY MASS SPECTROMETRY [LARGE SCALE ANALYSIS]</scope>
    <source>
        <tissue>Brain</tissue>
        <tissue>Kidney</tissue>
        <tissue>Liver</tissue>
        <tissue>Lung</tissue>
        <tissue>Pancreas</tissue>
        <tissue>Spleen</tissue>
        <tissue>Testis</tissue>
    </source>
</reference>
<accession>P97470</accession>
<accession>P33172</accession>
<keyword id="KW-0007">Acetylation</keyword>
<keyword id="KW-0963">Cytoplasm</keyword>
<keyword id="KW-0206">Cytoskeleton</keyword>
<keyword id="KW-0378">Hydrolase</keyword>
<keyword id="KW-0464">Manganese</keyword>
<keyword id="KW-0479">Metal-binding</keyword>
<keyword id="KW-0488">Methylation</keyword>
<keyword id="KW-0539">Nucleus</keyword>
<keyword id="KW-0904">Protein phosphatase</keyword>
<keyword id="KW-1185">Reference proteome</keyword>
<organism>
    <name type="scientific">Mus musculus</name>
    <name type="common">Mouse</name>
    <dbReference type="NCBI Taxonomy" id="10090"/>
    <lineage>
        <taxon>Eukaryota</taxon>
        <taxon>Metazoa</taxon>
        <taxon>Chordata</taxon>
        <taxon>Craniata</taxon>
        <taxon>Vertebrata</taxon>
        <taxon>Euteleostomi</taxon>
        <taxon>Mammalia</taxon>
        <taxon>Eutheria</taxon>
        <taxon>Euarchontoglires</taxon>
        <taxon>Glires</taxon>
        <taxon>Rodentia</taxon>
        <taxon>Myomorpha</taxon>
        <taxon>Muroidea</taxon>
        <taxon>Muridae</taxon>
        <taxon>Murinae</taxon>
        <taxon>Mus</taxon>
        <taxon>Mus</taxon>
    </lineage>
</organism>
<proteinExistence type="evidence at protein level"/>
<gene>
    <name type="primary">Ppp4c</name>
    <name type="synonym">Ppp4</name>
    <name type="synonym">Ppx</name>
</gene>
<sequence length="307" mass="35080">MAEISDLDRQIEQLRRCELIKESEVKALCAKAREILVEESNVQRVDSPVTVCGDIHGQFYDLKELFRVGGDVPETNYLFMGDFVDRGFYSVETFLLLLALKVRYPDRITLIRGNHESRQITQVYGFYDECLRKYGSVTVWRYCTEIFDYLSLSAIIDGKIFCVHGGLSPSIQTLDQIRTIDRKQEVPHDGPMCDLLWSDPEDTTGWGVSPRGAGYLFGSDVVAQFNAANDIDMICRAHQLVMEGYKWHFNETVLTVWSAPNYCYRCGNVAAILELDEHLQKDFIIFEAAPQETRGIPSKKPVADYFL</sequence>